<evidence type="ECO:0000255" key="1">
    <source>
        <dbReference type="HAMAP-Rule" id="MF_00233"/>
    </source>
</evidence>
<organism>
    <name type="scientific">Shewanella baltica (strain OS155 / ATCC BAA-1091)</name>
    <dbReference type="NCBI Taxonomy" id="325240"/>
    <lineage>
        <taxon>Bacteria</taxon>
        <taxon>Pseudomonadati</taxon>
        <taxon>Pseudomonadota</taxon>
        <taxon>Gammaproteobacteria</taxon>
        <taxon>Alteromonadales</taxon>
        <taxon>Shewanellaceae</taxon>
        <taxon>Shewanella</taxon>
    </lineage>
</organism>
<name>LOLB_SHEB5</name>
<dbReference type="EMBL" id="CP000563">
    <property type="protein sequence ID" value="ABN60222.1"/>
    <property type="molecule type" value="Genomic_DNA"/>
</dbReference>
<dbReference type="RefSeq" id="WP_011845826.1">
    <property type="nucleotide sequence ID" value="NC_009052.1"/>
</dbReference>
<dbReference type="SMR" id="A3D0F9"/>
<dbReference type="STRING" id="325240.Sbal_0694"/>
<dbReference type="KEGG" id="sbl:Sbal_0694"/>
<dbReference type="HOGENOM" id="CLU_092816_1_0_6"/>
<dbReference type="OrthoDB" id="9797618at2"/>
<dbReference type="Proteomes" id="UP000001557">
    <property type="component" value="Chromosome"/>
</dbReference>
<dbReference type="GO" id="GO:0009279">
    <property type="term" value="C:cell outer membrane"/>
    <property type="evidence" value="ECO:0007669"/>
    <property type="project" value="UniProtKB-SubCell"/>
</dbReference>
<dbReference type="GO" id="GO:0044874">
    <property type="term" value="P:lipoprotein localization to outer membrane"/>
    <property type="evidence" value="ECO:0007669"/>
    <property type="project" value="UniProtKB-UniRule"/>
</dbReference>
<dbReference type="GO" id="GO:0015031">
    <property type="term" value="P:protein transport"/>
    <property type="evidence" value="ECO:0007669"/>
    <property type="project" value="UniProtKB-KW"/>
</dbReference>
<dbReference type="CDD" id="cd16326">
    <property type="entry name" value="LolB"/>
    <property type="match status" value="1"/>
</dbReference>
<dbReference type="Gene3D" id="2.50.20.10">
    <property type="entry name" value="Lipoprotein localisation LolA/LolB/LppX"/>
    <property type="match status" value="1"/>
</dbReference>
<dbReference type="HAMAP" id="MF_00233">
    <property type="entry name" value="LolB"/>
    <property type="match status" value="1"/>
</dbReference>
<dbReference type="InterPro" id="IPR029046">
    <property type="entry name" value="LolA/LolB/LppX"/>
</dbReference>
<dbReference type="InterPro" id="IPR004565">
    <property type="entry name" value="OM_lipoprot_LolB"/>
</dbReference>
<dbReference type="NCBIfam" id="TIGR00548">
    <property type="entry name" value="lolB"/>
    <property type="match status" value="1"/>
</dbReference>
<dbReference type="Pfam" id="PF03550">
    <property type="entry name" value="LolB"/>
    <property type="match status" value="1"/>
</dbReference>
<dbReference type="SUPFAM" id="SSF89392">
    <property type="entry name" value="Prokaryotic lipoproteins and lipoprotein localization factors"/>
    <property type="match status" value="1"/>
</dbReference>
<dbReference type="PROSITE" id="PS51257">
    <property type="entry name" value="PROKAR_LIPOPROTEIN"/>
    <property type="match status" value="1"/>
</dbReference>
<accession>A3D0F9</accession>
<protein>
    <recommendedName>
        <fullName evidence="1">Outer-membrane lipoprotein LolB</fullName>
    </recommendedName>
</protein>
<reference key="1">
    <citation type="submission" date="2007-02" db="EMBL/GenBank/DDBJ databases">
        <title>Complete sequence of chromosome of Shewanella baltica OS155.</title>
        <authorList>
            <consortium name="US DOE Joint Genome Institute"/>
            <person name="Copeland A."/>
            <person name="Lucas S."/>
            <person name="Lapidus A."/>
            <person name="Barry K."/>
            <person name="Detter J.C."/>
            <person name="Glavina del Rio T."/>
            <person name="Hammon N."/>
            <person name="Israni S."/>
            <person name="Dalin E."/>
            <person name="Tice H."/>
            <person name="Pitluck S."/>
            <person name="Sims D.R."/>
            <person name="Brettin T."/>
            <person name="Bruce D."/>
            <person name="Han C."/>
            <person name="Tapia R."/>
            <person name="Brainard J."/>
            <person name="Schmutz J."/>
            <person name="Larimer F."/>
            <person name="Land M."/>
            <person name="Hauser L."/>
            <person name="Kyrpides N."/>
            <person name="Mikhailova N."/>
            <person name="Brettar I."/>
            <person name="Klappenbach J."/>
            <person name="Konstantinidis K."/>
            <person name="Rodrigues J."/>
            <person name="Tiedje J."/>
            <person name="Richardson P."/>
        </authorList>
    </citation>
    <scope>NUCLEOTIDE SEQUENCE [LARGE SCALE GENOMIC DNA]</scope>
    <source>
        <strain>OS155 / ATCC BAA-1091</strain>
    </source>
</reference>
<keyword id="KW-0998">Cell outer membrane</keyword>
<keyword id="KW-0143">Chaperone</keyword>
<keyword id="KW-0449">Lipoprotein</keyword>
<keyword id="KW-0472">Membrane</keyword>
<keyword id="KW-0564">Palmitate</keyword>
<keyword id="KW-0653">Protein transport</keyword>
<keyword id="KW-1185">Reference proteome</keyword>
<keyword id="KW-0732">Signal</keyword>
<keyword id="KW-0813">Transport</keyword>
<proteinExistence type="inferred from homology"/>
<sequence length="214" mass="23752">MNNLKRLTKTIFSCFTLSALLLLAGCETLPPMTDLSPITVTDARQATAWELQGKLAIKTPDDKLSANIYWRHSEDRDELTLTTMLGTTVLTLNSTPNSAHLHIDGKDFRDDNAQRLLERVSGWSIPLADLPLWITGQVGPNDQVIARDSQGKPKQLTNTQTPPPWQVAFLSWQSQSGASVPHQLKLERGDLQLKLQLNQWQALGKPAILVGEQP</sequence>
<gene>
    <name evidence="1" type="primary">lolB</name>
    <name type="ordered locus">Sbal_0694</name>
</gene>
<comment type="function">
    <text evidence="1">Plays a critical role in the incorporation of lipoproteins in the outer membrane after they are released by the LolA protein.</text>
</comment>
<comment type="subunit">
    <text evidence="1">Monomer.</text>
</comment>
<comment type="subcellular location">
    <subcellularLocation>
        <location evidence="1">Cell outer membrane</location>
        <topology evidence="1">Lipid-anchor</topology>
    </subcellularLocation>
</comment>
<comment type="similarity">
    <text evidence="1">Belongs to the LolB family.</text>
</comment>
<feature type="signal peptide" evidence="1">
    <location>
        <begin position="1"/>
        <end position="25"/>
    </location>
</feature>
<feature type="chain" id="PRO_1000021678" description="Outer-membrane lipoprotein LolB">
    <location>
        <begin position="26"/>
        <end position="214"/>
    </location>
</feature>
<feature type="lipid moiety-binding region" description="N-palmitoyl cysteine" evidence="1">
    <location>
        <position position="26"/>
    </location>
</feature>
<feature type="lipid moiety-binding region" description="S-diacylglycerol cysteine" evidence="1">
    <location>
        <position position="26"/>
    </location>
</feature>